<feature type="chain" id="PRO_0000216523" description="Putative gustatory receptor 59d">
    <location>
        <begin position="1"/>
        <end position="390"/>
    </location>
</feature>
<feature type="topological domain" description="Cytoplasmic" evidence="1">
    <location>
        <begin position="1"/>
        <end position="38"/>
    </location>
</feature>
<feature type="transmembrane region" description="Helical; Name=1" evidence="2">
    <location>
        <begin position="39"/>
        <end position="59"/>
    </location>
</feature>
<feature type="topological domain" description="Extracellular" evidence="1">
    <location>
        <begin position="60"/>
        <end position="75"/>
    </location>
</feature>
<feature type="transmembrane region" description="Helical; Name=2" evidence="2">
    <location>
        <begin position="76"/>
        <end position="96"/>
    </location>
</feature>
<feature type="topological domain" description="Cytoplasmic" evidence="1">
    <location>
        <begin position="97"/>
        <end position="128"/>
    </location>
</feature>
<feature type="transmembrane region" description="Helical; Name=3" evidence="2">
    <location>
        <begin position="129"/>
        <end position="149"/>
    </location>
</feature>
<feature type="topological domain" description="Extracellular" evidence="1">
    <location>
        <begin position="150"/>
        <end position="156"/>
    </location>
</feature>
<feature type="transmembrane region" description="Helical; Name=4" evidence="2">
    <location>
        <begin position="157"/>
        <end position="177"/>
    </location>
</feature>
<feature type="topological domain" description="Cytoplasmic" evidence="1">
    <location>
        <begin position="178"/>
        <end position="252"/>
    </location>
</feature>
<feature type="transmembrane region" description="Helical; Name=5" evidence="2">
    <location>
        <begin position="253"/>
        <end position="273"/>
    </location>
</feature>
<feature type="topological domain" description="Extracellular" evidence="1">
    <location>
        <begin position="274"/>
        <end position="283"/>
    </location>
</feature>
<feature type="transmembrane region" description="Helical; Name=6" evidence="2">
    <location>
        <begin position="284"/>
        <end position="304"/>
    </location>
</feature>
<feature type="topological domain" description="Cytoplasmic" evidence="1">
    <location>
        <begin position="305"/>
        <end position="366"/>
    </location>
</feature>
<feature type="transmembrane region" description="Helical; Name=7" evidence="2">
    <location>
        <begin position="367"/>
        <end position="383"/>
    </location>
</feature>
<feature type="topological domain" description="Extracellular" evidence="1">
    <location>
        <begin position="384"/>
        <end position="390"/>
    </location>
</feature>
<evidence type="ECO:0000250" key="1"/>
<evidence type="ECO:0000255" key="2"/>
<evidence type="ECO:0000269" key="3">
    <source>
    </source>
</evidence>
<evidence type="ECO:0000269" key="4">
    <source>
    </source>
</evidence>
<evidence type="ECO:0000305" key="5"/>
<name>GR59D_DROME</name>
<reference key="1">
    <citation type="journal article" date="2000" name="Science">
        <title>The genome sequence of Drosophila melanogaster.</title>
        <authorList>
            <person name="Adams M.D."/>
            <person name="Celniker S.E."/>
            <person name="Holt R.A."/>
            <person name="Evans C.A."/>
            <person name="Gocayne J.D."/>
            <person name="Amanatides P.G."/>
            <person name="Scherer S.E."/>
            <person name="Li P.W."/>
            <person name="Hoskins R.A."/>
            <person name="Galle R.F."/>
            <person name="George R.A."/>
            <person name="Lewis S.E."/>
            <person name="Richards S."/>
            <person name="Ashburner M."/>
            <person name="Henderson S.N."/>
            <person name="Sutton G.G."/>
            <person name="Wortman J.R."/>
            <person name="Yandell M.D."/>
            <person name="Zhang Q."/>
            <person name="Chen L.X."/>
            <person name="Brandon R.C."/>
            <person name="Rogers Y.-H.C."/>
            <person name="Blazej R.G."/>
            <person name="Champe M."/>
            <person name="Pfeiffer B.D."/>
            <person name="Wan K.H."/>
            <person name="Doyle C."/>
            <person name="Baxter E.G."/>
            <person name="Helt G."/>
            <person name="Nelson C.R."/>
            <person name="Miklos G.L.G."/>
            <person name="Abril J.F."/>
            <person name="Agbayani A."/>
            <person name="An H.-J."/>
            <person name="Andrews-Pfannkoch C."/>
            <person name="Baldwin D."/>
            <person name="Ballew R.M."/>
            <person name="Basu A."/>
            <person name="Baxendale J."/>
            <person name="Bayraktaroglu L."/>
            <person name="Beasley E.M."/>
            <person name="Beeson K.Y."/>
            <person name="Benos P.V."/>
            <person name="Berman B.P."/>
            <person name="Bhandari D."/>
            <person name="Bolshakov S."/>
            <person name="Borkova D."/>
            <person name="Botchan M.R."/>
            <person name="Bouck J."/>
            <person name="Brokstein P."/>
            <person name="Brottier P."/>
            <person name="Burtis K.C."/>
            <person name="Busam D.A."/>
            <person name="Butler H."/>
            <person name="Cadieu E."/>
            <person name="Center A."/>
            <person name="Chandra I."/>
            <person name="Cherry J.M."/>
            <person name="Cawley S."/>
            <person name="Dahlke C."/>
            <person name="Davenport L.B."/>
            <person name="Davies P."/>
            <person name="de Pablos B."/>
            <person name="Delcher A."/>
            <person name="Deng Z."/>
            <person name="Mays A.D."/>
            <person name="Dew I."/>
            <person name="Dietz S.M."/>
            <person name="Dodson K."/>
            <person name="Doup L.E."/>
            <person name="Downes M."/>
            <person name="Dugan-Rocha S."/>
            <person name="Dunkov B.C."/>
            <person name="Dunn P."/>
            <person name="Durbin K.J."/>
            <person name="Evangelista C.C."/>
            <person name="Ferraz C."/>
            <person name="Ferriera S."/>
            <person name="Fleischmann W."/>
            <person name="Fosler C."/>
            <person name="Gabrielian A.E."/>
            <person name="Garg N.S."/>
            <person name="Gelbart W.M."/>
            <person name="Glasser K."/>
            <person name="Glodek A."/>
            <person name="Gong F."/>
            <person name="Gorrell J.H."/>
            <person name="Gu Z."/>
            <person name="Guan P."/>
            <person name="Harris M."/>
            <person name="Harris N.L."/>
            <person name="Harvey D.A."/>
            <person name="Heiman T.J."/>
            <person name="Hernandez J.R."/>
            <person name="Houck J."/>
            <person name="Hostin D."/>
            <person name="Houston K.A."/>
            <person name="Howland T.J."/>
            <person name="Wei M.-H."/>
            <person name="Ibegwam C."/>
            <person name="Jalali M."/>
            <person name="Kalush F."/>
            <person name="Karpen G.H."/>
            <person name="Ke Z."/>
            <person name="Kennison J.A."/>
            <person name="Ketchum K.A."/>
            <person name="Kimmel B.E."/>
            <person name="Kodira C.D."/>
            <person name="Kraft C.L."/>
            <person name="Kravitz S."/>
            <person name="Kulp D."/>
            <person name="Lai Z."/>
            <person name="Lasko P."/>
            <person name="Lei Y."/>
            <person name="Levitsky A.A."/>
            <person name="Li J.H."/>
            <person name="Li Z."/>
            <person name="Liang Y."/>
            <person name="Lin X."/>
            <person name="Liu X."/>
            <person name="Mattei B."/>
            <person name="McIntosh T.C."/>
            <person name="McLeod M.P."/>
            <person name="McPherson D."/>
            <person name="Merkulov G."/>
            <person name="Milshina N.V."/>
            <person name="Mobarry C."/>
            <person name="Morris J."/>
            <person name="Moshrefi A."/>
            <person name="Mount S.M."/>
            <person name="Moy M."/>
            <person name="Murphy B."/>
            <person name="Murphy L."/>
            <person name="Muzny D.M."/>
            <person name="Nelson D.L."/>
            <person name="Nelson D.R."/>
            <person name="Nelson K.A."/>
            <person name="Nixon K."/>
            <person name="Nusskern D.R."/>
            <person name="Pacleb J.M."/>
            <person name="Palazzolo M."/>
            <person name="Pittman G.S."/>
            <person name="Pan S."/>
            <person name="Pollard J."/>
            <person name="Puri V."/>
            <person name="Reese M.G."/>
            <person name="Reinert K."/>
            <person name="Remington K."/>
            <person name="Saunders R.D.C."/>
            <person name="Scheeler F."/>
            <person name="Shen H."/>
            <person name="Shue B.C."/>
            <person name="Siden-Kiamos I."/>
            <person name="Simpson M."/>
            <person name="Skupski M.P."/>
            <person name="Smith T.J."/>
            <person name="Spier E."/>
            <person name="Spradling A.C."/>
            <person name="Stapleton M."/>
            <person name="Strong R."/>
            <person name="Sun E."/>
            <person name="Svirskas R."/>
            <person name="Tector C."/>
            <person name="Turner R."/>
            <person name="Venter E."/>
            <person name="Wang A.H."/>
            <person name="Wang X."/>
            <person name="Wang Z.-Y."/>
            <person name="Wassarman D.A."/>
            <person name="Weinstock G.M."/>
            <person name="Weissenbach J."/>
            <person name="Williams S.M."/>
            <person name="Woodage T."/>
            <person name="Worley K.C."/>
            <person name="Wu D."/>
            <person name="Yang S."/>
            <person name="Yao Q.A."/>
            <person name="Ye J."/>
            <person name="Yeh R.-F."/>
            <person name="Zaveri J.S."/>
            <person name="Zhan M."/>
            <person name="Zhang G."/>
            <person name="Zhao Q."/>
            <person name="Zheng L."/>
            <person name="Zheng X.H."/>
            <person name="Zhong F.N."/>
            <person name="Zhong W."/>
            <person name="Zhou X."/>
            <person name="Zhu S.C."/>
            <person name="Zhu X."/>
            <person name="Smith H.O."/>
            <person name="Gibbs R.A."/>
            <person name="Myers E.W."/>
            <person name="Rubin G.M."/>
            <person name="Venter J.C."/>
        </authorList>
    </citation>
    <scope>NUCLEOTIDE SEQUENCE [LARGE SCALE GENOMIC DNA]</scope>
    <source>
        <strain>Berkeley</strain>
    </source>
</reference>
<reference key="2">
    <citation type="journal article" date="2002" name="Genome Biol.">
        <title>Annotation of the Drosophila melanogaster euchromatic genome: a systematic review.</title>
        <authorList>
            <person name="Misra S."/>
            <person name="Crosby M.A."/>
            <person name="Mungall C.J."/>
            <person name="Matthews B.B."/>
            <person name="Campbell K.S."/>
            <person name="Hradecky P."/>
            <person name="Huang Y."/>
            <person name="Kaminker J.S."/>
            <person name="Millburn G.H."/>
            <person name="Prochnik S.E."/>
            <person name="Smith C.D."/>
            <person name="Tupy J.L."/>
            <person name="Whitfield E.J."/>
            <person name="Bayraktaroglu L."/>
            <person name="Berman B.P."/>
            <person name="Bettencourt B.R."/>
            <person name="Celniker S.E."/>
            <person name="de Grey A.D.N.J."/>
            <person name="Drysdale R.A."/>
            <person name="Harris N.L."/>
            <person name="Richter J."/>
            <person name="Russo S."/>
            <person name="Schroeder A.J."/>
            <person name="Shu S.Q."/>
            <person name="Stapleton M."/>
            <person name="Yamada C."/>
            <person name="Ashburner M."/>
            <person name="Gelbart W.M."/>
            <person name="Rubin G.M."/>
            <person name="Lewis S.E."/>
        </authorList>
    </citation>
    <scope>GENOME REANNOTATION</scope>
    <source>
        <strain>Berkeley</strain>
    </source>
</reference>
<reference key="3">
    <citation type="journal article" date="2000" name="Science">
        <title>Candidate taste receptors in Drosophila.</title>
        <authorList>
            <person name="Clyne P.J."/>
            <person name="Warr C.G."/>
            <person name="Carlson J.R."/>
        </authorList>
    </citation>
    <scope>IDENTIFICATION</scope>
    <scope>TISSUE SPECIFICITY</scope>
</reference>
<reference key="4">
    <citation type="journal article" date="2001" name="Curr. Biol.">
        <title>Spatially restricted expression of candidate taste receptors in the Drosophila gustatory system.</title>
        <authorList>
            <person name="Dunipace L."/>
            <person name="Meister S."/>
            <person name="McNealy C."/>
            <person name="Amrein H."/>
        </authorList>
    </citation>
    <scope>IDENTIFICATION</scope>
</reference>
<reference key="5">
    <citation type="journal article" date="2011" name="J. Neurosci.">
        <title>Molecular and cellular organization of the taste system in the Drosophila larva.</title>
        <authorList>
            <person name="Kwon J.Y."/>
            <person name="Dahanukar A."/>
            <person name="Weiss L.A."/>
            <person name="Carlson J.R."/>
        </authorList>
    </citation>
    <scope>TISSUE SPECIFICITY</scope>
</reference>
<dbReference type="EMBL" id="AE013599">
    <property type="protein sequence ID" value="AAM68236.3"/>
    <property type="molecule type" value="Genomic_DNA"/>
</dbReference>
<dbReference type="RefSeq" id="NP_611758.2">
    <property type="nucleotide sequence ID" value="NM_137914.2"/>
</dbReference>
<dbReference type="SMR" id="P58985"/>
<dbReference type="FunCoup" id="P58985">
    <property type="interactions" value="15"/>
</dbReference>
<dbReference type="IntAct" id="P58985">
    <property type="interactions" value="2"/>
</dbReference>
<dbReference type="STRING" id="7227.FBpp0071886"/>
<dbReference type="PaxDb" id="7227-FBpp0071886"/>
<dbReference type="EnsemblMetazoa" id="FBtr0071976">
    <property type="protein sequence ID" value="FBpp0071886"/>
    <property type="gene ID" value="FBgn0041236"/>
</dbReference>
<dbReference type="GeneID" id="117343"/>
<dbReference type="KEGG" id="dme:Dmel_CG30330"/>
<dbReference type="AGR" id="FB:FBgn0041236"/>
<dbReference type="CTD" id="117343"/>
<dbReference type="FlyBase" id="FBgn0041236">
    <property type="gene designation" value="Gr59d"/>
</dbReference>
<dbReference type="VEuPathDB" id="VectorBase:FBgn0041236"/>
<dbReference type="eggNOG" id="ENOG502T9G7">
    <property type="taxonomic scope" value="Eukaryota"/>
</dbReference>
<dbReference type="GeneTree" id="ENSGT00540000073531"/>
<dbReference type="HOGENOM" id="CLU_058694_0_0_1"/>
<dbReference type="InParanoid" id="P58985"/>
<dbReference type="OMA" id="TMDNLYI"/>
<dbReference type="OrthoDB" id="7856336at2759"/>
<dbReference type="PhylomeDB" id="P58985"/>
<dbReference type="BioGRID-ORCS" id="117343">
    <property type="hits" value="0 hits in 1 CRISPR screen"/>
</dbReference>
<dbReference type="GenomeRNAi" id="117343"/>
<dbReference type="PRO" id="PR:P58985"/>
<dbReference type="Proteomes" id="UP000000803">
    <property type="component" value="Chromosome 2R"/>
</dbReference>
<dbReference type="GO" id="GO:0030424">
    <property type="term" value="C:axon"/>
    <property type="evidence" value="ECO:0000318"/>
    <property type="project" value="GO_Central"/>
</dbReference>
<dbReference type="GO" id="GO:0030425">
    <property type="term" value="C:dendrite"/>
    <property type="evidence" value="ECO:0000318"/>
    <property type="project" value="GO_Central"/>
</dbReference>
<dbReference type="GO" id="GO:0016020">
    <property type="term" value="C:membrane"/>
    <property type="evidence" value="ECO:0000303"/>
    <property type="project" value="UniProtKB"/>
</dbReference>
<dbReference type="GO" id="GO:0043025">
    <property type="term" value="C:neuronal cell body"/>
    <property type="evidence" value="ECO:0000318"/>
    <property type="project" value="GO_Central"/>
</dbReference>
<dbReference type="GO" id="GO:0005886">
    <property type="term" value="C:plasma membrane"/>
    <property type="evidence" value="ECO:0000250"/>
    <property type="project" value="FlyBase"/>
</dbReference>
<dbReference type="GO" id="GO:0015276">
    <property type="term" value="F:ligand-gated monoatomic ion channel activity"/>
    <property type="evidence" value="ECO:0000250"/>
    <property type="project" value="FlyBase"/>
</dbReference>
<dbReference type="GO" id="GO:0008527">
    <property type="term" value="F:taste receptor activity"/>
    <property type="evidence" value="ECO:0000250"/>
    <property type="project" value="FlyBase"/>
</dbReference>
<dbReference type="GO" id="GO:0034220">
    <property type="term" value="P:monoatomic ion transmembrane transport"/>
    <property type="evidence" value="ECO:0000250"/>
    <property type="project" value="FlyBase"/>
</dbReference>
<dbReference type="GO" id="GO:0050909">
    <property type="term" value="P:sensory perception of taste"/>
    <property type="evidence" value="ECO:0000250"/>
    <property type="project" value="FlyBase"/>
</dbReference>
<dbReference type="GO" id="GO:0007165">
    <property type="term" value="P:signal transduction"/>
    <property type="evidence" value="ECO:0007669"/>
    <property type="project" value="UniProtKB-KW"/>
</dbReference>
<dbReference type="InterPro" id="IPR013604">
    <property type="entry name" value="7TM_chemorcpt"/>
</dbReference>
<dbReference type="Pfam" id="PF08395">
    <property type="entry name" value="7tm_7"/>
    <property type="match status" value="1"/>
</dbReference>
<comment type="function">
    <text evidence="1">Probable gustatory receptor which mediates acceptance or avoidance behavior, depending on its substrates.</text>
</comment>
<comment type="subcellular location">
    <subcellularLocation>
        <location evidence="1">Cell membrane</location>
        <topology evidence="1">Multi-pass membrane protein</topology>
    </subcellularLocation>
</comment>
<comment type="tissue specificity">
    <text evidence="3 4">Expressed in the adult labellar chemosensory neurons. In larvae, is expressed in neurons of the terminal external chemosensory organ as well as in the dorsal pharyngeal sense organ.</text>
</comment>
<comment type="similarity">
    <text evidence="5">Belongs to the insect chemoreceptor superfamily. Gustatory receptor (GR) family. Gr22e subfamily.</text>
</comment>
<organism>
    <name type="scientific">Drosophila melanogaster</name>
    <name type="common">Fruit fly</name>
    <dbReference type="NCBI Taxonomy" id="7227"/>
    <lineage>
        <taxon>Eukaryota</taxon>
        <taxon>Metazoa</taxon>
        <taxon>Ecdysozoa</taxon>
        <taxon>Arthropoda</taxon>
        <taxon>Hexapoda</taxon>
        <taxon>Insecta</taxon>
        <taxon>Pterygota</taxon>
        <taxon>Neoptera</taxon>
        <taxon>Endopterygota</taxon>
        <taxon>Diptera</taxon>
        <taxon>Brachycera</taxon>
        <taxon>Muscomorpha</taxon>
        <taxon>Ephydroidea</taxon>
        <taxon>Drosophilidae</taxon>
        <taxon>Drosophila</taxon>
        <taxon>Sophophora</taxon>
    </lineage>
</organism>
<proteinExistence type="evidence at transcript level"/>
<accession>P58985</accession>
<gene>
    <name type="primary">Gr59d</name>
    <name type="synonym">GR59D.1</name>
    <name type="ORF">CG30330</name>
</gene>
<keyword id="KW-1003">Cell membrane</keyword>
<keyword id="KW-0472">Membrane</keyword>
<keyword id="KW-0675">Receptor</keyword>
<keyword id="KW-1185">Reference proteome</keyword>
<keyword id="KW-0807">Transducer</keyword>
<keyword id="KW-0812">Transmembrane</keyword>
<keyword id="KW-1133">Transmembrane helix</keyword>
<sequence length="390" mass="44823">MADLLKLCLRIAYAYGRLTGVINFKIDLKTGQALVTRGATLISVSTHLLIFALLLYQTMRKSVVNVMWKYANSLHEYVFLVIAGFRVVCVFLELVSRWSQRRTFVRLFNSFRRLYQRNPDIIQYCRRSIVSKFFCVTMTETLHIIVTLAMMRNRLSIALALRIWAVLSLTAIINVIITQYYVATACVRGRYALLNKDLQAIVTESQSLVPNGGGVFVTKCCYLADRLERIAKSQSDLQELVENLSTAYEGEVVCLVITYYLNMLGTSYLLFSISKYGNFGNNLLVIITLCGIVYFVFYVVDCWINAFNVFYLLDAHDKMVKLLNKRTLFQPGLDHRLEMVFENFALNLVRNPLKLHMYGLFEFGRGTSFAVFNSLLTHSLLLIQYDVQNF</sequence>
<protein>
    <recommendedName>
        <fullName>Putative gustatory receptor 59d</fullName>
    </recommendedName>
</protein>